<sequence length="232" mass="25878">MENQPKLNSSKEVIAFLAERFPHCFSAEGEARPLKIGIFQDLVDRVAGEMNLSKTQLRSALRLYTSSWRYLYGVKPGATRVDLDGNPCGELDEQHVEHARKQLEEAKARVQAQRAEQQAKKREAAAAAGEKEDAPRRERKPRPTTPRRKEGAERKPRSQKPVEKAPKTVKAPREEQHTPVSDISALTVGQALKVKAGQNAMDATVLEITKDGVRVQLNSGMSLIVRAEHLVF</sequence>
<comment type="function">
    <text evidence="1">RNA chaperone with significant RNA binding, RNA strand exchange and RNA duplexing activities. May regulate ProP activity through an RNA-based, post-transcriptional mechanism.</text>
</comment>
<comment type="subcellular location">
    <subcellularLocation>
        <location evidence="1">Cytoplasm</location>
    </subcellularLocation>
</comment>
<comment type="similarity">
    <text evidence="1">Belongs to the ProQ family.</text>
</comment>
<gene>
    <name evidence="1" type="primary">proQ</name>
    <name type="ordered locus">UTI89_C2032</name>
</gene>
<organism>
    <name type="scientific">Escherichia coli (strain UTI89 / UPEC)</name>
    <dbReference type="NCBI Taxonomy" id="364106"/>
    <lineage>
        <taxon>Bacteria</taxon>
        <taxon>Pseudomonadati</taxon>
        <taxon>Pseudomonadota</taxon>
        <taxon>Gammaproteobacteria</taxon>
        <taxon>Enterobacterales</taxon>
        <taxon>Enterobacteriaceae</taxon>
        <taxon>Escherichia</taxon>
    </lineage>
</organism>
<reference key="1">
    <citation type="journal article" date="2006" name="Proc. Natl. Acad. Sci. U.S.A.">
        <title>Identification of genes subject to positive selection in uropathogenic strains of Escherichia coli: a comparative genomics approach.</title>
        <authorList>
            <person name="Chen S.L."/>
            <person name="Hung C.-S."/>
            <person name="Xu J."/>
            <person name="Reigstad C.S."/>
            <person name="Magrini V."/>
            <person name="Sabo A."/>
            <person name="Blasiar D."/>
            <person name="Bieri T."/>
            <person name="Meyer R.R."/>
            <person name="Ozersky P."/>
            <person name="Armstrong J.R."/>
            <person name="Fulton R.S."/>
            <person name="Latreille J.P."/>
            <person name="Spieth J."/>
            <person name="Hooton T.M."/>
            <person name="Mardis E.R."/>
            <person name="Hultgren S.J."/>
            <person name="Gordon J.I."/>
        </authorList>
    </citation>
    <scope>NUCLEOTIDE SEQUENCE [LARGE SCALE GENOMIC DNA]</scope>
    <source>
        <strain>UTI89 / UPEC</strain>
    </source>
</reference>
<keyword id="KW-0143">Chaperone</keyword>
<keyword id="KW-0963">Cytoplasm</keyword>
<keyword id="KW-0694">RNA-binding</keyword>
<dbReference type="EMBL" id="CP000243">
    <property type="protein sequence ID" value="ABE07508.1"/>
    <property type="molecule type" value="Genomic_DNA"/>
</dbReference>
<dbReference type="RefSeq" id="WP_000431376.1">
    <property type="nucleotide sequence ID" value="NZ_CP064825.1"/>
</dbReference>
<dbReference type="SMR" id="Q1RAV6"/>
<dbReference type="KEGG" id="eci:UTI89_C2032"/>
<dbReference type="HOGENOM" id="CLU_113254_0_0_6"/>
<dbReference type="Proteomes" id="UP000001952">
    <property type="component" value="Chromosome"/>
</dbReference>
<dbReference type="GO" id="GO:0005829">
    <property type="term" value="C:cytosol"/>
    <property type="evidence" value="ECO:0007669"/>
    <property type="project" value="TreeGrafter"/>
</dbReference>
<dbReference type="GO" id="GO:0033592">
    <property type="term" value="F:RNA strand annealing activity"/>
    <property type="evidence" value="ECO:0007669"/>
    <property type="project" value="UniProtKB-UniRule"/>
</dbReference>
<dbReference type="GO" id="GO:0034057">
    <property type="term" value="F:RNA strand-exchange activity"/>
    <property type="evidence" value="ECO:0007669"/>
    <property type="project" value="UniProtKB-UniRule"/>
</dbReference>
<dbReference type="GO" id="GO:0010608">
    <property type="term" value="P:post-transcriptional regulation of gene expression"/>
    <property type="evidence" value="ECO:0007669"/>
    <property type="project" value="InterPro"/>
</dbReference>
<dbReference type="FunFam" id="1.10.1710.10:FF:000001">
    <property type="entry name" value="RNA chaperone ProQ"/>
    <property type="match status" value="1"/>
</dbReference>
<dbReference type="Gene3D" id="1.10.1710.10">
    <property type="entry name" value="ProQ/FinO domain"/>
    <property type="match status" value="1"/>
</dbReference>
<dbReference type="HAMAP" id="MF_00749">
    <property type="entry name" value="ProQ"/>
    <property type="match status" value="1"/>
</dbReference>
<dbReference type="InterPro" id="IPR023529">
    <property type="entry name" value="ProQ"/>
</dbReference>
<dbReference type="InterPro" id="IPR016103">
    <property type="entry name" value="ProQ/FinO"/>
</dbReference>
<dbReference type="InterPro" id="IPR036442">
    <property type="entry name" value="ProQ/FinO_sf"/>
</dbReference>
<dbReference type="InterPro" id="IPR035236">
    <property type="entry name" value="ProQ_C"/>
</dbReference>
<dbReference type="NCBIfam" id="NF003434">
    <property type="entry name" value="PRK04950.1"/>
    <property type="match status" value="1"/>
</dbReference>
<dbReference type="PANTHER" id="PTHR38106">
    <property type="entry name" value="RNA CHAPERONE PROQ"/>
    <property type="match status" value="1"/>
</dbReference>
<dbReference type="PANTHER" id="PTHR38106:SF1">
    <property type="entry name" value="RNA CHAPERONE PROQ"/>
    <property type="match status" value="1"/>
</dbReference>
<dbReference type="Pfam" id="PF04352">
    <property type="entry name" value="ProQ"/>
    <property type="match status" value="1"/>
</dbReference>
<dbReference type="Pfam" id="PF17516">
    <property type="entry name" value="ProQ_C"/>
    <property type="match status" value="1"/>
</dbReference>
<dbReference type="SMART" id="SM00945">
    <property type="entry name" value="ProQ"/>
    <property type="match status" value="1"/>
</dbReference>
<dbReference type="SUPFAM" id="SSF48657">
    <property type="entry name" value="FinO-like"/>
    <property type="match status" value="1"/>
</dbReference>
<proteinExistence type="inferred from homology"/>
<accession>Q1RAV6</accession>
<evidence type="ECO:0000255" key="1">
    <source>
        <dbReference type="HAMAP-Rule" id="MF_00749"/>
    </source>
</evidence>
<evidence type="ECO:0000256" key="2">
    <source>
        <dbReference type="SAM" id="MobiDB-lite"/>
    </source>
</evidence>
<name>PROQ_ECOUT</name>
<protein>
    <recommendedName>
        <fullName evidence="1">RNA chaperone ProQ</fullName>
    </recommendedName>
</protein>
<feature type="chain" id="PRO_0000303087" description="RNA chaperone ProQ">
    <location>
        <begin position="1"/>
        <end position="232"/>
    </location>
</feature>
<feature type="region of interest" description="Disordered" evidence="2">
    <location>
        <begin position="105"/>
        <end position="182"/>
    </location>
</feature>
<feature type="compositionally biased region" description="Basic and acidic residues" evidence="2">
    <location>
        <begin position="117"/>
        <end position="136"/>
    </location>
</feature>
<feature type="compositionally biased region" description="Basic residues" evidence="2">
    <location>
        <begin position="137"/>
        <end position="146"/>
    </location>
</feature>
<feature type="compositionally biased region" description="Basic and acidic residues" evidence="2">
    <location>
        <begin position="147"/>
        <end position="177"/>
    </location>
</feature>